<gene>
    <name type="primary">clpB</name>
    <name type="ordered locus">CTC_00536</name>
</gene>
<name>CLPB_CLOTE</name>
<reference key="1">
    <citation type="journal article" date="2003" name="Proc. Natl. Acad. Sci. U.S.A.">
        <title>The genome sequence of Clostridium tetani, the causative agent of tetanus disease.</title>
        <authorList>
            <person name="Brueggemann H."/>
            <person name="Baeumer S."/>
            <person name="Fricke W.F."/>
            <person name="Wiezer A."/>
            <person name="Liesegang H."/>
            <person name="Decker I."/>
            <person name="Herzberg C."/>
            <person name="Martinez-Arias R."/>
            <person name="Merkl R."/>
            <person name="Henne A."/>
            <person name="Gottschalk G."/>
        </authorList>
    </citation>
    <scope>NUCLEOTIDE SEQUENCE [LARGE SCALE GENOMIC DNA]</scope>
    <source>
        <strain>Massachusetts / E88</strain>
    </source>
</reference>
<accession>Q898C7</accession>
<evidence type="ECO:0000250" key="1"/>
<evidence type="ECO:0000255" key="2">
    <source>
        <dbReference type="PROSITE-ProRule" id="PRU01251"/>
    </source>
</evidence>
<evidence type="ECO:0000305" key="3"/>
<organism>
    <name type="scientific">Clostridium tetani (strain Massachusetts / E88)</name>
    <dbReference type="NCBI Taxonomy" id="212717"/>
    <lineage>
        <taxon>Bacteria</taxon>
        <taxon>Bacillati</taxon>
        <taxon>Bacillota</taxon>
        <taxon>Clostridia</taxon>
        <taxon>Eubacteriales</taxon>
        <taxon>Clostridiaceae</taxon>
        <taxon>Clostridium</taxon>
    </lineage>
</organism>
<proteinExistence type="inferred from homology"/>
<sequence>MDIEKLTLKVQQTINDSQKIAVKYNHQQLEPFHLFAALVFQEDGLIPNILGKMNINIKVLRDEIKRELNEMPKVLGDGAQNSGVYATRSFEEIFIRAESIAKDFKDSYISVEHIMLSLMQGRSTSIKKILDKFNIRKDKFLNVLQQVRGNQRVDTQDPEGTYEALVKYGRNLIEDAKKHKLDPVIGRDEEIRRIVRILSRRTKNNPVLIGDPGVGKTAIIEGLAERIVRGDVPEGLKNKIIFSLDMGALIAGAKFRGEFEERLKAVLKEVENSQGKIILFIDEIHNIVGAGKTEGSMDAGNLIKPMLARGELNCIGATTFDEYRKYIEKDKALERRFQPVIIDEPTVEDTISIIRGLKERFEIHHGIRIHDSAIVAAAKLSQRYITDRYLPDKAIDLIDEAGAMIRTEIDSLPTELDSIKRKIFQMEIEKEALAKEKDSRSKERLEDLEKELSNLKEKDKEMTAKYEKEKEQIINMRNLKQKLDEVKGQLEKAEREYDLNKVAELKYGIIPGIKSQIEEKEILIKENSQGNMLKEEVTENEISKIISHWTGIPVTKLIEGEKDKLLRLEDELKSRVIGQDEAVEAVSNAVLRARAGMKDPQKPIGSFIFLGPTGVGKTELAKTLCKNLFDSEENIIRIDMSEYMEKYSVSRLIGAPPGYVGYEEGGQLTEAVRRKPYSVILFDEIEKAHDDVFNIFLQILDDGRLTDNKGKTVDFKNCIIIMTSNIGSSYLLENKKEDGIDETVKNKVSNALKDRFKPEFLNRLDDIIMFKPLTNREITKIIDIFLQDIENRLKDRNITLIVTENAKELMAKEGYDAIYGARPLKRYIENILETKIAKQIIKGDIYEGCKIGVDIKGEEIIIGKI</sequence>
<keyword id="KW-0067">ATP-binding</keyword>
<keyword id="KW-0143">Chaperone</keyword>
<keyword id="KW-0175">Coiled coil</keyword>
<keyword id="KW-0963">Cytoplasm</keyword>
<keyword id="KW-0547">Nucleotide-binding</keyword>
<keyword id="KW-1185">Reference proteome</keyword>
<keyword id="KW-0677">Repeat</keyword>
<keyword id="KW-0346">Stress response</keyword>
<protein>
    <recommendedName>
        <fullName>Chaperone protein ClpB</fullName>
    </recommendedName>
</protein>
<dbReference type="EMBL" id="AE015927">
    <property type="protein sequence ID" value="AAO35156.1"/>
    <property type="molecule type" value="Genomic_DNA"/>
</dbReference>
<dbReference type="RefSeq" id="WP_011098823.1">
    <property type="nucleotide sequence ID" value="NC_004557.1"/>
</dbReference>
<dbReference type="SMR" id="Q898C7"/>
<dbReference type="STRING" id="212717.CTC_00536"/>
<dbReference type="GeneID" id="24254000"/>
<dbReference type="KEGG" id="ctc:CTC_00536"/>
<dbReference type="HOGENOM" id="CLU_005070_4_0_9"/>
<dbReference type="OrthoDB" id="9803641at2"/>
<dbReference type="Proteomes" id="UP000001412">
    <property type="component" value="Chromosome"/>
</dbReference>
<dbReference type="GO" id="GO:0005737">
    <property type="term" value="C:cytoplasm"/>
    <property type="evidence" value="ECO:0007669"/>
    <property type="project" value="UniProtKB-SubCell"/>
</dbReference>
<dbReference type="GO" id="GO:0005524">
    <property type="term" value="F:ATP binding"/>
    <property type="evidence" value="ECO:0007669"/>
    <property type="project" value="UniProtKB-KW"/>
</dbReference>
<dbReference type="GO" id="GO:0016887">
    <property type="term" value="F:ATP hydrolysis activity"/>
    <property type="evidence" value="ECO:0007669"/>
    <property type="project" value="InterPro"/>
</dbReference>
<dbReference type="GO" id="GO:0034605">
    <property type="term" value="P:cellular response to heat"/>
    <property type="evidence" value="ECO:0007669"/>
    <property type="project" value="TreeGrafter"/>
</dbReference>
<dbReference type="GO" id="GO:0042026">
    <property type="term" value="P:protein refolding"/>
    <property type="evidence" value="ECO:0007669"/>
    <property type="project" value="InterPro"/>
</dbReference>
<dbReference type="CDD" id="cd00009">
    <property type="entry name" value="AAA"/>
    <property type="match status" value="1"/>
</dbReference>
<dbReference type="CDD" id="cd19499">
    <property type="entry name" value="RecA-like_ClpB_Hsp104-like"/>
    <property type="match status" value="1"/>
</dbReference>
<dbReference type="FunFam" id="3.40.50.300:FF:000120">
    <property type="entry name" value="ATP-dependent chaperone ClpB"/>
    <property type="match status" value="1"/>
</dbReference>
<dbReference type="FunFam" id="3.40.50.300:FF:000025">
    <property type="entry name" value="ATP-dependent Clp protease subunit"/>
    <property type="match status" value="1"/>
</dbReference>
<dbReference type="FunFam" id="3.40.50.300:FF:000010">
    <property type="entry name" value="Chaperone clpB 1, putative"/>
    <property type="match status" value="1"/>
</dbReference>
<dbReference type="Gene3D" id="1.10.8.60">
    <property type="match status" value="1"/>
</dbReference>
<dbReference type="Gene3D" id="1.10.1780.10">
    <property type="entry name" value="Clp, N-terminal domain"/>
    <property type="match status" value="1"/>
</dbReference>
<dbReference type="Gene3D" id="3.40.50.300">
    <property type="entry name" value="P-loop containing nucleotide triphosphate hydrolases"/>
    <property type="match status" value="3"/>
</dbReference>
<dbReference type="InterPro" id="IPR003593">
    <property type="entry name" value="AAA+_ATPase"/>
</dbReference>
<dbReference type="InterPro" id="IPR003959">
    <property type="entry name" value="ATPase_AAA_core"/>
</dbReference>
<dbReference type="InterPro" id="IPR017730">
    <property type="entry name" value="Chaperonin_ClpB"/>
</dbReference>
<dbReference type="InterPro" id="IPR019489">
    <property type="entry name" value="Clp_ATPase_C"/>
</dbReference>
<dbReference type="InterPro" id="IPR036628">
    <property type="entry name" value="Clp_N_dom_sf"/>
</dbReference>
<dbReference type="InterPro" id="IPR004176">
    <property type="entry name" value="Clp_R_dom"/>
</dbReference>
<dbReference type="InterPro" id="IPR001270">
    <property type="entry name" value="ClpA/B"/>
</dbReference>
<dbReference type="InterPro" id="IPR018368">
    <property type="entry name" value="ClpA/B_CS1"/>
</dbReference>
<dbReference type="InterPro" id="IPR028299">
    <property type="entry name" value="ClpA/B_CS2"/>
</dbReference>
<dbReference type="InterPro" id="IPR041546">
    <property type="entry name" value="ClpA/ClpB_AAA_lid"/>
</dbReference>
<dbReference type="InterPro" id="IPR050130">
    <property type="entry name" value="ClpA_ClpB"/>
</dbReference>
<dbReference type="InterPro" id="IPR027417">
    <property type="entry name" value="P-loop_NTPase"/>
</dbReference>
<dbReference type="NCBIfam" id="TIGR03346">
    <property type="entry name" value="chaperone_ClpB"/>
    <property type="match status" value="1"/>
</dbReference>
<dbReference type="PANTHER" id="PTHR11638">
    <property type="entry name" value="ATP-DEPENDENT CLP PROTEASE"/>
    <property type="match status" value="1"/>
</dbReference>
<dbReference type="PANTHER" id="PTHR11638:SF18">
    <property type="entry name" value="HEAT SHOCK PROTEIN 104"/>
    <property type="match status" value="1"/>
</dbReference>
<dbReference type="Pfam" id="PF00004">
    <property type="entry name" value="AAA"/>
    <property type="match status" value="1"/>
</dbReference>
<dbReference type="Pfam" id="PF07724">
    <property type="entry name" value="AAA_2"/>
    <property type="match status" value="1"/>
</dbReference>
<dbReference type="Pfam" id="PF17871">
    <property type="entry name" value="AAA_lid_9"/>
    <property type="match status" value="1"/>
</dbReference>
<dbReference type="Pfam" id="PF02861">
    <property type="entry name" value="Clp_N"/>
    <property type="match status" value="2"/>
</dbReference>
<dbReference type="Pfam" id="PF10431">
    <property type="entry name" value="ClpB_D2-small"/>
    <property type="match status" value="1"/>
</dbReference>
<dbReference type="PRINTS" id="PR00300">
    <property type="entry name" value="CLPPROTEASEA"/>
</dbReference>
<dbReference type="SMART" id="SM00382">
    <property type="entry name" value="AAA"/>
    <property type="match status" value="2"/>
</dbReference>
<dbReference type="SMART" id="SM01086">
    <property type="entry name" value="ClpB_D2-small"/>
    <property type="match status" value="1"/>
</dbReference>
<dbReference type="SUPFAM" id="SSF81923">
    <property type="entry name" value="Double Clp-N motif"/>
    <property type="match status" value="1"/>
</dbReference>
<dbReference type="SUPFAM" id="SSF52540">
    <property type="entry name" value="P-loop containing nucleoside triphosphate hydrolases"/>
    <property type="match status" value="2"/>
</dbReference>
<dbReference type="PROSITE" id="PS51903">
    <property type="entry name" value="CLP_R"/>
    <property type="match status" value="1"/>
</dbReference>
<dbReference type="PROSITE" id="PS00870">
    <property type="entry name" value="CLPAB_1"/>
    <property type="match status" value="1"/>
</dbReference>
<dbReference type="PROSITE" id="PS00871">
    <property type="entry name" value="CLPAB_2"/>
    <property type="match status" value="1"/>
</dbReference>
<comment type="function">
    <text evidence="1">Part of a stress-induced multi-chaperone system, it is involved in the recovery of the cell from heat-induced damage, in cooperation with DnaK, DnaJ and GrpE. Acts before DnaK, in the processing of protein aggregates. Protein binding stimulates the ATPase activity; ATP hydrolysis unfolds the denatured protein aggregates, which probably helps expose new hydrophobic binding sites on the surface of ClpB-bound aggregates, contributing to the solubilization and refolding of denatured protein aggregates by DnaK (By similarity).</text>
</comment>
<comment type="subunit">
    <text evidence="1">Homohexamer. The oligomerization is ATP-dependent (By similarity).</text>
</comment>
<comment type="subcellular location">
    <subcellularLocation>
        <location evidence="3">Cytoplasm</location>
    </subcellularLocation>
</comment>
<comment type="domain">
    <text evidence="1">The Clp repeat (R) domain probably functions as a substrate-discriminating domain, recruiting aggregated proteins to the ClpB hexamer and/or stabilizing bound proteins. The NBD2 domain is responsible for oligomerization, whereas the NBD1 domain stabilizes the hexamer probably in an ATP-dependent manner. The movement of the coiled-coil domain is essential for ClpB ability to rescue proteins from an aggregated state, probably by pulling apart large aggregated proteins, which are bound between the coiled-coils motifs of adjacent ClpB subunits in the functional hexamer (By similarity).</text>
</comment>
<comment type="similarity">
    <text evidence="3">Belongs to the ClpA/ClpB family.</text>
</comment>
<feature type="chain" id="PRO_0000191113" description="Chaperone protein ClpB">
    <location>
        <begin position="1"/>
        <end position="865"/>
    </location>
</feature>
<feature type="domain" description="Clp R" evidence="2">
    <location>
        <begin position="3"/>
        <end position="150"/>
    </location>
</feature>
<feature type="region of interest" description="Repeat 1" evidence="2">
    <location>
        <begin position="6"/>
        <end position="71"/>
    </location>
</feature>
<feature type="region of interest" description="Repeat 2" evidence="2">
    <location>
        <begin position="86"/>
        <end position="150"/>
    </location>
</feature>
<feature type="region of interest" description="NBD1" evidence="1">
    <location>
        <begin position="163"/>
        <end position="344"/>
    </location>
</feature>
<feature type="region of interest" description="Linker" evidence="1">
    <location>
        <begin position="345"/>
        <end position="551"/>
    </location>
</feature>
<feature type="region of interest" description="NBD2" evidence="1">
    <location>
        <begin position="561"/>
        <end position="772"/>
    </location>
</feature>
<feature type="region of interest" description="C-terminal" evidence="1">
    <location>
        <begin position="773"/>
        <end position="865"/>
    </location>
</feature>
<feature type="coiled-coil region" evidence="1">
    <location>
        <begin position="395"/>
        <end position="529"/>
    </location>
</feature>
<feature type="binding site" evidence="1">
    <location>
        <begin position="210"/>
        <end position="217"/>
    </location>
    <ligand>
        <name>ATP</name>
        <dbReference type="ChEBI" id="CHEBI:30616"/>
        <label>1</label>
    </ligand>
</feature>
<feature type="binding site" evidence="1">
    <location>
        <begin position="611"/>
        <end position="618"/>
    </location>
    <ligand>
        <name>ATP</name>
        <dbReference type="ChEBI" id="CHEBI:30616"/>
        <label>2</label>
    </ligand>
</feature>